<proteinExistence type="evidence at transcript level"/>
<keyword id="KW-0256">Endoplasmic reticulum</keyword>
<keyword id="KW-0472">Membrane</keyword>
<keyword id="KW-1185">Reference proteome</keyword>
<keyword id="KW-0812">Transmembrane</keyword>
<keyword id="KW-1133">Transmembrane helix</keyword>
<organism>
    <name type="scientific">Arabidopsis thaliana</name>
    <name type="common">Mouse-ear cress</name>
    <dbReference type="NCBI Taxonomy" id="3702"/>
    <lineage>
        <taxon>Eukaryota</taxon>
        <taxon>Viridiplantae</taxon>
        <taxon>Streptophyta</taxon>
        <taxon>Embryophyta</taxon>
        <taxon>Tracheophyta</taxon>
        <taxon>Spermatophyta</taxon>
        <taxon>Magnoliopsida</taxon>
        <taxon>eudicotyledons</taxon>
        <taxon>Gunneridae</taxon>
        <taxon>Pentapetalae</taxon>
        <taxon>rosids</taxon>
        <taxon>malvids</taxon>
        <taxon>Brassicales</taxon>
        <taxon>Brassicaceae</taxon>
        <taxon>Camelineae</taxon>
        <taxon>Arabidopsis</taxon>
    </lineage>
</organism>
<protein>
    <recommendedName>
        <fullName>Derlin-1</fullName>
    </recommendedName>
    <alternativeName>
        <fullName>AtDerlin1-1</fullName>
    </alternativeName>
</protein>
<comment type="function">
    <text evidence="1">May be involved in the degradation process of specific misfolded endoplasmic reticulum (ER) luminal proteins.</text>
</comment>
<comment type="subcellular location">
    <subcellularLocation>
        <location evidence="1">Endoplasmic reticulum membrane</location>
        <topology evidence="1">Multi-pass membrane protein</topology>
    </subcellularLocation>
</comment>
<comment type="similarity">
    <text evidence="4">Belongs to the derlin family.</text>
</comment>
<comment type="sequence caution" evidence="4">
    <conflict type="erroneous gene model prediction">
        <sequence resource="EMBL-CDS" id="CAB79691"/>
    </conflict>
</comment>
<reference key="1">
    <citation type="journal article" date="1999" name="Nature">
        <title>Sequence and analysis of chromosome 4 of the plant Arabidopsis thaliana.</title>
        <authorList>
            <person name="Mayer K.F.X."/>
            <person name="Schueller C."/>
            <person name="Wambutt R."/>
            <person name="Murphy G."/>
            <person name="Volckaert G."/>
            <person name="Pohl T."/>
            <person name="Duesterhoeft A."/>
            <person name="Stiekema W."/>
            <person name="Entian K.-D."/>
            <person name="Terryn N."/>
            <person name="Harris B."/>
            <person name="Ansorge W."/>
            <person name="Brandt P."/>
            <person name="Grivell L.A."/>
            <person name="Rieger M."/>
            <person name="Weichselgartner M."/>
            <person name="de Simone V."/>
            <person name="Obermaier B."/>
            <person name="Mache R."/>
            <person name="Mueller M."/>
            <person name="Kreis M."/>
            <person name="Delseny M."/>
            <person name="Puigdomenech P."/>
            <person name="Watson M."/>
            <person name="Schmidtheini T."/>
            <person name="Reichert B."/>
            <person name="Portetelle D."/>
            <person name="Perez-Alonso M."/>
            <person name="Boutry M."/>
            <person name="Bancroft I."/>
            <person name="Vos P."/>
            <person name="Hoheisel J."/>
            <person name="Zimmermann W."/>
            <person name="Wedler H."/>
            <person name="Ridley P."/>
            <person name="Langham S.-A."/>
            <person name="McCullagh B."/>
            <person name="Bilham L."/>
            <person name="Robben J."/>
            <person name="van der Schueren J."/>
            <person name="Grymonprez B."/>
            <person name="Chuang Y.-J."/>
            <person name="Vandenbussche F."/>
            <person name="Braeken M."/>
            <person name="Weltjens I."/>
            <person name="Voet M."/>
            <person name="Bastiaens I."/>
            <person name="Aert R."/>
            <person name="Defoor E."/>
            <person name="Weitzenegger T."/>
            <person name="Bothe G."/>
            <person name="Ramsperger U."/>
            <person name="Hilbert H."/>
            <person name="Braun M."/>
            <person name="Holzer E."/>
            <person name="Brandt A."/>
            <person name="Peters S."/>
            <person name="van Staveren M."/>
            <person name="Dirkse W."/>
            <person name="Mooijman P."/>
            <person name="Klein Lankhorst R."/>
            <person name="Rose M."/>
            <person name="Hauf J."/>
            <person name="Koetter P."/>
            <person name="Berneiser S."/>
            <person name="Hempel S."/>
            <person name="Feldpausch M."/>
            <person name="Lamberth S."/>
            <person name="Van den Daele H."/>
            <person name="De Keyser A."/>
            <person name="Buysshaert C."/>
            <person name="Gielen J."/>
            <person name="Villarroel R."/>
            <person name="De Clercq R."/>
            <person name="van Montagu M."/>
            <person name="Rogers J."/>
            <person name="Cronin A."/>
            <person name="Quail M.A."/>
            <person name="Bray-Allen S."/>
            <person name="Clark L."/>
            <person name="Doggett J."/>
            <person name="Hall S."/>
            <person name="Kay M."/>
            <person name="Lennard N."/>
            <person name="McLay K."/>
            <person name="Mayes R."/>
            <person name="Pettett A."/>
            <person name="Rajandream M.A."/>
            <person name="Lyne M."/>
            <person name="Benes V."/>
            <person name="Rechmann S."/>
            <person name="Borkova D."/>
            <person name="Bloecker H."/>
            <person name="Scharfe M."/>
            <person name="Grimm M."/>
            <person name="Loehnert T.-H."/>
            <person name="Dose S."/>
            <person name="de Haan M."/>
            <person name="Maarse A.C."/>
            <person name="Schaefer M."/>
            <person name="Mueller-Auer S."/>
            <person name="Gabel C."/>
            <person name="Fuchs M."/>
            <person name="Fartmann B."/>
            <person name="Granderath K."/>
            <person name="Dauner D."/>
            <person name="Herzl A."/>
            <person name="Neumann S."/>
            <person name="Argiriou A."/>
            <person name="Vitale D."/>
            <person name="Liguori R."/>
            <person name="Piravandi E."/>
            <person name="Massenet O."/>
            <person name="Quigley F."/>
            <person name="Clabauld G."/>
            <person name="Muendlein A."/>
            <person name="Felber R."/>
            <person name="Schnabl S."/>
            <person name="Hiller R."/>
            <person name="Schmidt W."/>
            <person name="Lecharny A."/>
            <person name="Aubourg S."/>
            <person name="Chefdor F."/>
            <person name="Cooke R."/>
            <person name="Berger C."/>
            <person name="Monfort A."/>
            <person name="Casacuberta E."/>
            <person name="Gibbons T."/>
            <person name="Weber N."/>
            <person name="Vandenbol M."/>
            <person name="Bargues M."/>
            <person name="Terol J."/>
            <person name="Torres A."/>
            <person name="Perez-Perez A."/>
            <person name="Purnelle B."/>
            <person name="Bent E."/>
            <person name="Johnson S."/>
            <person name="Tacon D."/>
            <person name="Jesse T."/>
            <person name="Heijnen L."/>
            <person name="Schwarz S."/>
            <person name="Scholler P."/>
            <person name="Heber S."/>
            <person name="Francs P."/>
            <person name="Bielke C."/>
            <person name="Frishman D."/>
            <person name="Haase D."/>
            <person name="Lemcke K."/>
            <person name="Mewes H.-W."/>
            <person name="Stocker S."/>
            <person name="Zaccaria P."/>
            <person name="Bevan M."/>
            <person name="Wilson R.K."/>
            <person name="de la Bastide M."/>
            <person name="Habermann K."/>
            <person name="Parnell L."/>
            <person name="Dedhia N."/>
            <person name="Gnoj L."/>
            <person name="Schutz K."/>
            <person name="Huang E."/>
            <person name="Spiegel L."/>
            <person name="Sekhon M."/>
            <person name="Murray J."/>
            <person name="Sheet P."/>
            <person name="Cordes M."/>
            <person name="Abu-Threideh J."/>
            <person name="Stoneking T."/>
            <person name="Kalicki J."/>
            <person name="Graves T."/>
            <person name="Harmon G."/>
            <person name="Edwards J."/>
            <person name="Latreille P."/>
            <person name="Courtney L."/>
            <person name="Cloud J."/>
            <person name="Abbott A."/>
            <person name="Scott K."/>
            <person name="Johnson D."/>
            <person name="Minx P."/>
            <person name="Bentley D."/>
            <person name="Fulton B."/>
            <person name="Miller N."/>
            <person name="Greco T."/>
            <person name="Kemp K."/>
            <person name="Kramer J."/>
            <person name="Fulton L."/>
            <person name="Mardis E."/>
            <person name="Dante M."/>
            <person name="Pepin K."/>
            <person name="Hillier L.W."/>
            <person name="Nelson J."/>
            <person name="Spieth J."/>
            <person name="Ryan E."/>
            <person name="Andrews S."/>
            <person name="Geisel C."/>
            <person name="Layman D."/>
            <person name="Du H."/>
            <person name="Ali J."/>
            <person name="Berghoff A."/>
            <person name="Jones K."/>
            <person name="Drone K."/>
            <person name="Cotton M."/>
            <person name="Joshu C."/>
            <person name="Antonoiu B."/>
            <person name="Zidanic M."/>
            <person name="Strong C."/>
            <person name="Sun H."/>
            <person name="Lamar B."/>
            <person name="Yordan C."/>
            <person name="Ma P."/>
            <person name="Zhong J."/>
            <person name="Preston R."/>
            <person name="Vil D."/>
            <person name="Shekher M."/>
            <person name="Matero A."/>
            <person name="Shah R."/>
            <person name="Swaby I.K."/>
            <person name="O'Shaughnessy A."/>
            <person name="Rodriguez M."/>
            <person name="Hoffman J."/>
            <person name="Till S."/>
            <person name="Granat S."/>
            <person name="Shohdy N."/>
            <person name="Hasegawa A."/>
            <person name="Hameed A."/>
            <person name="Lodhi M."/>
            <person name="Johnson A."/>
            <person name="Chen E."/>
            <person name="Marra M.A."/>
            <person name="Martienssen R."/>
            <person name="McCombie W.R."/>
        </authorList>
    </citation>
    <scope>NUCLEOTIDE SEQUENCE [LARGE SCALE GENOMIC DNA]</scope>
    <source>
        <strain>cv. Columbia</strain>
    </source>
</reference>
<reference key="2">
    <citation type="journal article" date="2017" name="Plant J.">
        <title>Araport11: a complete reannotation of the Arabidopsis thaliana reference genome.</title>
        <authorList>
            <person name="Cheng C.Y."/>
            <person name="Krishnakumar V."/>
            <person name="Chan A.P."/>
            <person name="Thibaud-Nissen F."/>
            <person name="Schobel S."/>
            <person name="Town C.D."/>
        </authorList>
    </citation>
    <scope>GENOME REANNOTATION</scope>
    <source>
        <strain>cv. Columbia</strain>
    </source>
</reference>
<reference key="3">
    <citation type="journal article" date="2003" name="Science">
        <title>Empirical analysis of transcriptional activity in the Arabidopsis genome.</title>
        <authorList>
            <person name="Yamada K."/>
            <person name="Lim J."/>
            <person name="Dale J.M."/>
            <person name="Chen H."/>
            <person name="Shinn P."/>
            <person name="Palm C.J."/>
            <person name="Southwick A.M."/>
            <person name="Wu H.C."/>
            <person name="Kim C.J."/>
            <person name="Nguyen M."/>
            <person name="Pham P.K."/>
            <person name="Cheuk R.F."/>
            <person name="Karlin-Newmann G."/>
            <person name="Liu S.X."/>
            <person name="Lam B."/>
            <person name="Sakano H."/>
            <person name="Wu T."/>
            <person name="Yu G."/>
            <person name="Miranda M."/>
            <person name="Quach H.L."/>
            <person name="Tripp M."/>
            <person name="Chang C.H."/>
            <person name="Lee J.M."/>
            <person name="Toriumi M.J."/>
            <person name="Chan M.M."/>
            <person name="Tang C.C."/>
            <person name="Onodera C.S."/>
            <person name="Deng J.M."/>
            <person name="Akiyama K."/>
            <person name="Ansari Y."/>
            <person name="Arakawa T."/>
            <person name="Banh J."/>
            <person name="Banno F."/>
            <person name="Bowser L."/>
            <person name="Brooks S.Y."/>
            <person name="Carninci P."/>
            <person name="Chao Q."/>
            <person name="Choy N."/>
            <person name="Enju A."/>
            <person name="Goldsmith A.D."/>
            <person name="Gurjal M."/>
            <person name="Hansen N.F."/>
            <person name="Hayashizaki Y."/>
            <person name="Johnson-Hopson C."/>
            <person name="Hsuan V.W."/>
            <person name="Iida K."/>
            <person name="Karnes M."/>
            <person name="Khan S."/>
            <person name="Koesema E."/>
            <person name="Ishida J."/>
            <person name="Jiang P.X."/>
            <person name="Jones T."/>
            <person name="Kawai J."/>
            <person name="Kamiya A."/>
            <person name="Meyers C."/>
            <person name="Nakajima M."/>
            <person name="Narusaka M."/>
            <person name="Seki M."/>
            <person name="Sakurai T."/>
            <person name="Satou M."/>
            <person name="Tamse R."/>
            <person name="Vaysberg M."/>
            <person name="Wallender E.K."/>
            <person name="Wong C."/>
            <person name="Yamamura Y."/>
            <person name="Yuan S."/>
            <person name="Shinozaki K."/>
            <person name="Davis R.W."/>
            <person name="Theologis A."/>
            <person name="Ecker J.R."/>
        </authorList>
    </citation>
    <scope>NUCLEOTIDE SEQUENCE [LARGE SCALE MRNA]</scope>
    <source>
        <strain>cv. Columbia</strain>
    </source>
</reference>
<evidence type="ECO:0000250" key="1"/>
<evidence type="ECO:0000255" key="2"/>
<evidence type="ECO:0000256" key="3">
    <source>
        <dbReference type="SAM" id="MobiDB-lite"/>
    </source>
</evidence>
<evidence type="ECO:0000305" key="4"/>
<name>DERL1_ARATH</name>
<accession>Q8VZU9</accession>
<accession>Q9M0E8</accession>
<dbReference type="EMBL" id="AL161574">
    <property type="protein sequence ID" value="CAB79691.1"/>
    <property type="status" value="ALT_SEQ"/>
    <property type="molecule type" value="Genomic_DNA"/>
</dbReference>
<dbReference type="EMBL" id="CP002687">
    <property type="protein sequence ID" value="AEE85618.1"/>
    <property type="molecule type" value="Genomic_DNA"/>
</dbReference>
<dbReference type="EMBL" id="AY063817">
    <property type="protein sequence ID" value="AAL36173.1"/>
    <property type="molecule type" value="mRNA"/>
</dbReference>
<dbReference type="EMBL" id="AY096457">
    <property type="protein sequence ID" value="AAM20097.1"/>
    <property type="molecule type" value="mRNA"/>
</dbReference>
<dbReference type="PIR" id="C85342">
    <property type="entry name" value="C85342"/>
</dbReference>
<dbReference type="RefSeq" id="NP_194662.2">
    <property type="nucleotide sequence ID" value="NM_119078.5"/>
</dbReference>
<dbReference type="SMR" id="Q8VZU9"/>
<dbReference type="BioGRID" id="14341">
    <property type="interactions" value="51"/>
</dbReference>
<dbReference type="FunCoup" id="Q8VZU9">
    <property type="interactions" value="997"/>
</dbReference>
<dbReference type="IntAct" id="Q8VZU9">
    <property type="interactions" value="48"/>
</dbReference>
<dbReference type="STRING" id="3702.Q8VZU9"/>
<dbReference type="TCDB" id="3.A.16.1.5">
    <property type="family name" value="the endoplasmic reticular retrotranslocon (er-rt) family"/>
</dbReference>
<dbReference type="PaxDb" id="3702-AT4G29330.1"/>
<dbReference type="ProteomicsDB" id="224568"/>
<dbReference type="EnsemblPlants" id="AT4G29330.1">
    <property type="protein sequence ID" value="AT4G29330.1"/>
    <property type="gene ID" value="AT4G29330"/>
</dbReference>
<dbReference type="GeneID" id="829054"/>
<dbReference type="Gramene" id="AT4G29330.1">
    <property type="protein sequence ID" value="AT4G29330.1"/>
    <property type="gene ID" value="AT4G29330"/>
</dbReference>
<dbReference type="KEGG" id="ath:AT4G29330"/>
<dbReference type="Araport" id="AT4G29330"/>
<dbReference type="TAIR" id="AT4G29330">
    <property type="gene designation" value="DER1"/>
</dbReference>
<dbReference type="eggNOG" id="KOG0858">
    <property type="taxonomic scope" value="Eukaryota"/>
</dbReference>
<dbReference type="HOGENOM" id="CLU_051898_5_0_1"/>
<dbReference type="InParanoid" id="Q8VZU9"/>
<dbReference type="OrthoDB" id="1716531at2759"/>
<dbReference type="PhylomeDB" id="Q8VZU9"/>
<dbReference type="PRO" id="PR:Q8VZU9"/>
<dbReference type="Proteomes" id="UP000006548">
    <property type="component" value="Chromosome 4"/>
</dbReference>
<dbReference type="ExpressionAtlas" id="Q8VZU9">
    <property type="expression patterns" value="baseline and differential"/>
</dbReference>
<dbReference type="GO" id="GO:0005789">
    <property type="term" value="C:endoplasmic reticulum membrane"/>
    <property type="evidence" value="ECO:0007669"/>
    <property type="project" value="UniProtKB-SubCell"/>
</dbReference>
<dbReference type="GO" id="GO:0005886">
    <property type="term" value="C:plasma membrane"/>
    <property type="evidence" value="ECO:0007005"/>
    <property type="project" value="TAIR"/>
</dbReference>
<dbReference type="GO" id="GO:0006950">
    <property type="term" value="P:response to stress"/>
    <property type="evidence" value="ECO:0007669"/>
    <property type="project" value="UniProtKB-ARBA"/>
</dbReference>
<dbReference type="InterPro" id="IPR007599">
    <property type="entry name" value="DER1"/>
</dbReference>
<dbReference type="InterPro" id="IPR035952">
    <property type="entry name" value="Rhomboid-like_sf"/>
</dbReference>
<dbReference type="PANTHER" id="PTHR11009">
    <property type="entry name" value="DER1-LIKE PROTEIN, DERLIN"/>
    <property type="match status" value="1"/>
</dbReference>
<dbReference type="Pfam" id="PF04511">
    <property type="entry name" value="DER1"/>
    <property type="match status" value="1"/>
</dbReference>
<dbReference type="SUPFAM" id="SSF144091">
    <property type="entry name" value="Rhomboid-like"/>
    <property type="match status" value="1"/>
</dbReference>
<sequence length="266" mass="29214">MSSPGEFYNSLPPITKAYGTLCFFTTVATQLGLVAPVHIALIPELVLKQFQIWRLITNLFFLGGFSINFGIRLLMIARYGVQLEKGPFERRTADFLWMMIFGSFTLLVLSVIPFFWTPFLGVSLVFMLLYLWSREFPNANISLYGLVTLKAFYLPWAMLALDVIFGSPIMPDLLGIIAGHLYYFLTVLHPLATGKNYLKTPKWVNKIVARWRIGAPVASVRQAGGVGAAGPGAGGGVGGGGAYSSARAPPESSNTAFRGRSYRLTD</sequence>
<gene>
    <name type="primary">DER1</name>
    <name type="ordered locus">At4g29330</name>
    <name type="ORF">F17A13.150</name>
</gene>
<feature type="chain" id="PRO_0000249238" description="Derlin-1">
    <location>
        <begin position="1"/>
        <end position="266"/>
    </location>
</feature>
<feature type="topological domain" description="Cytoplasmic" evidence="2">
    <location>
        <begin position="1"/>
        <end position="20"/>
    </location>
</feature>
<feature type="transmembrane region" description="Helical; Name=1" evidence="2">
    <location>
        <begin position="21"/>
        <end position="41"/>
    </location>
</feature>
<feature type="topological domain" description="Lumenal" evidence="2">
    <location>
        <begin position="42"/>
        <end position="55"/>
    </location>
</feature>
<feature type="transmembrane region" description="Helical; Name=2" evidence="2">
    <location>
        <begin position="56"/>
        <end position="76"/>
    </location>
</feature>
<feature type="topological domain" description="Cytoplasmic" evidence="2">
    <location>
        <begin position="77"/>
        <end position="94"/>
    </location>
</feature>
<feature type="transmembrane region" description="Helical; Name=3" evidence="2">
    <location>
        <begin position="95"/>
        <end position="115"/>
    </location>
</feature>
<feature type="topological domain" description="Lumenal" evidence="2">
    <location>
        <begin position="116"/>
        <end position="156"/>
    </location>
</feature>
<feature type="transmembrane region" description="Helical; Name=4" evidence="2">
    <location>
        <begin position="157"/>
        <end position="177"/>
    </location>
</feature>
<feature type="topological domain" description="Cytoplasmic" evidence="2">
    <location>
        <begin position="178"/>
        <end position="266"/>
    </location>
</feature>
<feature type="region of interest" description="Disordered" evidence="3">
    <location>
        <begin position="235"/>
        <end position="266"/>
    </location>
</feature>